<feature type="chain" id="PRO_1000094772" description="S-adenosylmethionine:tRNA ribosyltransferase-isomerase">
    <location>
        <begin position="1"/>
        <end position="356"/>
    </location>
</feature>
<proteinExistence type="inferred from homology"/>
<name>QUEA_ECO5E</name>
<protein>
    <recommendedName>
        <fullName evidence="1">S-adenosylmethionine:tRNA ribosyltransferase-isomerase</fullName>
        <ecNumber evidence="1">2.4.99.17</ecNumber>
    </recommendedName>
    <alternativeName>
        <fullName evidence="1">Queuosine biosynthesis protein QueA</fullName>
    </alternativeName>
</protein>
<sequence>MRVTDFSFELPESLIAHYPMPERSSCRLLSLDGPTGALTHGTFTDLLDKLNPGDLLVFNNTRVIPARLFGRKASGGKIEVLVERMLDDKRILAHIRASKAPKPGAELLLGDDESINATMTARHGALFEVEFNDERSVLDILNSIGHMPLPPYIDRPDEDADRELYQTVYSEKPGAVAAPTAGLHFDEPLLEKLRAKGVEMAFVTLHVGAGTFQPVRVDTIEDHIMHSEYAEVPQDVVDAVLAAKARGNRVIAVGTTSVRSLESAAQAAKNDLIEPFFDDTQIFIYPGFQYKVVDALVTNFHLPESTLIMLVSAFAGYQHTMNAYKAAVEEKYRFFSYGDAMFITYNPQAINERVGE</sequence>
<accession>B5Z2W1</accession>
<comment type="function">
    <text evidence="1">Transfers and isomerizes the ribose moiety from AdoMet to the 7-aminomethyl group of 7-deazaguanine (preQ1-tRNA) to give epoxyqueuosine (oQ-tRNA).</text>
</comment>
<comment type="catalytic activity">
    <reaction evidence="1">
        <text>7-aminomethyl-7-carbaguanosine(34) in tRNA + S-adenosyl-L-methionine = epoxyqueuosine(34) in tRNA + adenine + L-methionine + 2 H(+)</text>
        <dbReference type="Rhea" id="RHEA:32155"/>
        <dbReference type="Rhea" id="RHEA-COMP:10342"/>
        <dbReference type="Rhea" id="RHEA-COMP:18582"/>
        <dbReference type="ChEBI" id="CHEBI:15378"/>
        <dbReference type="ChEBI" id="CHEBI:16708"/>
        <dbReference type="ChEBI" id="CHEBI:57844"/>
        <dbReference type="ChEBI" id="CHEBI:59789"/>
        <dbReference type="ChEBI" id="CHEBI:82833"/>
        <dbReference type="ChEBI" id="CHEBI:194443"/>
        <dbReference type="EC" id="2.4.99.17"/>
    </reaction>
</comment>
<comment type="pathway">
    <text evidence="1">tRNA modification; tRNA-queuosine biosynthesis.</text>
</comment>
<comment type="subunit">
    <text evidence="1">Monomer.</text>
</comment>
<comment type="subcellular location">
    <subcellularLocation>
        <location evidence="1">Cytoplasm</location>
    </subcellularLocation>
</comment>
<comment type="similarity">
    <text evidence="1">Belongs to the QueA family.</text>
</comment>
<evidence type="ECO:0000255" key="1">
    <source>
        <dbReference type="HAMAP-Rule" id="MF_00113"/>
    </source>
</evidence>
<reference key="1">
    <citation type="journal article" date="2011" name="Proc. Natl. Acad. Sci. U.S.A.">
        <title>Genomic anatomy of Escherichia coli O157:H7 outbreaks.</title>
        <authorList>
            <person name="Eppinger M."/>
            <person name="Mammel M.K."/>
            <person name="Leclerc J.E."/>
            <person name="Ravel J."/>
            <person name="Cebula T.A."/>
        </authorList>
    </citation>
    <scope>NUCLEOTIDE SEQUENCE [LARGE SCALE GENOMIC DNA]</scope>
    <source>
        <strain>EC4115 / EHEC</strain>
    </source>
</reference>
<gene>
    <name evidence="1" type="primary">queA</name>
    <name type="ordered locus">ECH74115_0485</name>
</gene>
<dbReference type="EC" id="2.4.99.17" evidence="1"/>
<dbReference type="EMBL" id="CP001164">
    <property type="protein sequence ID" value="ACI39129.1"/>
    <property type="molecule type" value="Genomic_DNA"/>
</dbReference>
<dbReference type="RefSeq" id="WP_001266503.1">
    <property type="nucleotide sequence ID" value="NC_011353.1"/>
</dbReference>
<dbReference type="SMR" id="B5Z2W1"/>
<dbReference type="GeneID" id="93777055"/>
<dbReference type="KEGG" id="ecf:ECH74115_0485"/>
<dbReference type="HOGENOM" id="CLU_039110_1_0_6"/>
<dbReference type="UniPathway" id="UPA00392"/>
<dbReference type="GO" id="GO:0005737">
    <property type="term" value="C:cytoplasm"/>
    <property type="evidence" value="ECO:0007669"/>
    <property type="project" value="UniProtKB-SubCell"/>
</dbReference>
<dbReference type="GO" id="GO:0051075">
    <property type="term" value="F:S-adenosylmethionine:tRNA ribosyltransferase-isomerase activity"/>
    <property type="evidence" value="ECO:0007669"/>
    <property type="project" value="UniProtKB-EC"/>
</dbReference>
<dbReference type="GO" id="GO:0008616">
    <property type="term" value="P:queuosine biosynthetic process"/>
    <property type="evidence" value="ECO:0007669"/>
    <property type="project" value="UniProtKB-UniRule"/>
</dbReference>
<dbReference type="GO" id="GO:0002099">
    <property type="term" value="P:tRNA wobble guanine modification"/>
    <property type="evidence" value="ECO:0007669"/>
    <property type="project" value="TreeGrafter"/>
</dbReference>
<dbReference type="FunFam" id="2.40.10.240:FF:000001">
    <property type="entry name" value="S-adenosylmethionine:tRNA ribosyltransferase-isomerase"/>
    <property type="match status" value="1"/>
</dbReference>
<dbReference type="FunFam" id="3.40.1780.10:FF:000001">
    <property type="entry name" value="S-adenosylmethionine:tRNA ribosyltransferase-isomerase"/>
    <property type="match status" value="1"/>
</dbReference>
<dbReference type="Gene3D" id="2.40.10.240">
    <property type="entry name" value="QueA-like"/>
    <property type="match status" value="1"/>
</dbReference>
<dbReference type="Gene3D" id="3.40.1780.10">
    <property type="entry name" value="QueA-like"/>
    <property type="match status" value="1"/>
</dbReference>
<dbReference type="HAMAP" id="MF_00113">
    <property type="entry name" value="QueA"/>
    <property type="match status" value="1"/>
</dbReference>
<dbReference type="InterPro" id="IPR003699">
    <property type="entry name" value="QueA"/>
</dbReference>
<dbReference type="InterPro" id="IPR042118">
    <property type="entry name" value="QueA_dom1"/>
</dbReference>
<dbReference type="InterPro" id="IPR042119">
    <property type="entry name" value="QueA_dom2"/>
</dbReference>
<dbReference type="InterPro" id="IPR036100">
    <property type="entry name" value="QueA_sf"/>
</dbReference>
<dbReference type="NCBIfam" id="NF001140">
    <property type="entry name" value="PRK00147.1"/>
    <property type="match status" value="1"/>
</dbReference>
<dbReference type="NCBIfam" id="TIGR00113">
    <property type="entry name" value="queA"/>
    <property type="match status" value="1"/>
</dbReference>
<dbReference type="PANTHER" id="PTHR30307">
    <property type="entry name" value="S-ADENOSYLMETHIONINE:TRNA RIBOSYLTRANSFERASE-ISOMERASE"/>
    <property type="match status" value="1"/>
</dbReference>
<dbReference type="PANTHER" id="PTHR30307:SF0">
    <property type="entry name" value="S-ADENOSYLMETHIONINE:TRNA RIBOSYLTRANSFERASE-ISOMERASE"/>
    <property type="match status" value="1"/>
</dbReference>
<dbReference type="Pfam" id="PF02547">
    <property type="entry name" value="Queuosine_synth"/>
    <property type="match status" value="1"/>
</dbReference>
<dbReference type="SUPFAM" id="SSF111337">
    <property type="entry name" value="QueA-like"/>
    <property type="match status" value="1"/>
</dbReference>
<organism>
    <name type="scientific">Escherichia coli O157:H7 (strain EC4115 / EHEC)</name>
    <dbReference type="NCBI Taxonomy" id="444450"/>
    <lineage>
        <taxon>Bacteria</taxon>
        <taxon>Pseudomonadati</taxon>
        <taxon>Pseudomonadota</taxon>
        <taxon>Gammaproteobacteria</taxon>
        <taxon>Enterobacterales</taxon>
        <taxon>Enterobacteriaceae</taxon>
        <taxon>Escherichia</taxon>
    </lineage>
</organism>
<keyword id="KW-0963">Cytoplasm</keyword>
<keyword id="KW-0671">Queuosine biosynthesis</keyword>
<keyword id="KW-0949">S-adenosyl-L-methionine</keyword>
<keyword id="KW-0808">Transferase</keyword>